<feature type="chain" id="PRO_1000141850" description="Large ribosomal subunit protein uL3">
    <location>
        <begin position="1"/>
        <end position="217"/>
    </location>
</feature>
<feature type="region of interest" description="Disordered" evidence="2">
    <location>
        <begin position="135"/>
        <end position="154"/>
    </location>
</feature>
<feature type="modified residue" description="N5-methylglutamine" evidence="1">
    <location>
        <position position="153"/>
    </location>
</feature>
<accession>B6J263</accession>
<proteinExistence type="inferred from homology"/>
<name>RL3_COXB2</name>
<sequence length="217" mass="23508">MSIGLIGRKCGMTRIFTETGSSIPVTVVEVILNRITQVKTVETDGYRAFQVAYGKKSSARVNKPLAGHYSKAAVEAGNALREFRLGNEELTEAKAGDELKVDIFKEGQVVDVRGLTRGKGFAGTVKRHNFRTQDATHGNSLSHRAPGSIGQCQTPGRVWKGKKMAGQLGNVYCTVQSQEIIKVDVERNLLLIKGALPGAPGGEVIITQSSKKRKEDK</sequence>
<organism>
    <name type="scientific">Coxiella burnetii (strain CbuG_Q212)</name>
    <name type="common">Coxiella burnetii (strain Q212)</name>
    <dbReference type="NCBI Taxonomy" id="434923"/>
    <lineage>
        <taxon>Bacteria</taxon>
        <taxon>Pseudomonadati</taxon>
        <taxon>Pseudomonadota</taxon>
        <taxon>Gammaproteobacteria</taxon>
        <taxon>Legionellales</taxon>
        <taxon>Coxiellaceae</taxon>
        <taxon>Coxiella</taxon>
    </lineage>
</organism>
<comment type="function">
    <text evidence="1">One of the primary rRNA binding proteins, it binds directly near the 3'-end of the 23S rRNA, where it nucleates assembly of the 50S subunit.</text>
</comment>
<comment type="subunit">
    <text evidence="1">Part of the 50S ribosomal subunit. Forms a cluster with proteins L14 and L19.</text>
</comment>
<comment type="PTM">
    <text evidence="1">Methylated by PrmB.</text>
</comment>
<comment type="similarity">
    <text evidence="1">Belongs to the universal ribosomal protein uL3 family.</text>
</comment>
<keyword id="KW-0488">Methylation</keyword>
<keyword id="KW-0687">Ribonucleoprotein</keyword>
<keyword id="KW-0689">Ribosomal protein</keyword>
<keyword id="KW-0694">RNA-binding</keyword>
<keyword id="KW-0699">rRNA-binding</keyword>
<gene>
    <name evidence="1" type="primary">rplC</name>
    <name type="ordered locus">CbuG_1767</name>
</gene>
<reference key="1">
    <citation type="journal article" date="2009" name="Infect. Immun.">
        <title>Comparative genomics reveal extensive transposon-mediated genomic plasticity and diversity among potential effector proteins within the genus Coxiella.</title>
        <authorList>
            <person name="Beare P.A."/>
            <person name="Unsworth N."/>
            <person name="Andoh M."/>
            <person name="Voth D.E."/>
            <person name="Omsland A."/>
            <person name="Gilk S.D."/>
            <person name="Williams K.P."/>
            <person name="Sobral B.W."/>
            <person name="Kupko J.J. III"/>
            <person name="Porcella S.F."/>
            <person name="Samuel J.E."/>
            <person name="Heinzen R.A."/>
        </authorList>
    </citation>
    <scope>NUCLEOTIDE SEQUENCE [LARGE SCALE GENOMIC DNA]</scope>
    <source>
        <strain>CbuG_Q212</strain>
    </source>
</reference>
<dbReference type="EMBL" id="CP001019">
    <property type="protein sequence ID" value="ACJ19041.1"/>
    <property type="molecule type" value="Genomic_DNA"/>
</dbReference>
<dbReference type="RefSeq" id="WP_010957453.1">
    <property type="nucleotide sequence ID" value="NC_011527.1"/>
</dbReference>
<dbReference type="SMR" id="B6J263"/>
<dbReference type="KEGG" id="cbg:CbuG_1767"/>
<dbReference type="HOGENOM" id="CLU_044142_4_1_6"/>
<dbReference type="GO" id="GO:0022625">
    <property type="term" value="C:cytosolic large ribosomal subunit"/>
    <property type="evidence" value="ECO:0007669"/>
    <property type="project" value="TreeGrafter"/>
</dbReference>
<dbReference type="GO" id="GO:0019843">
    <property type="term" value="F:rRNA binding"/>
    <property type="evidence" value="ECO:0007669"/>
    <property type="project" value="UniProtKB-UniRule"/>
</dbReference>
<dbReference type="GO" id="GO:0003735">
    <property type="term" value="F:structural constituent of ribosome"/>
    <property type="evidence" value="ECO:0007669"/>
    <property type="project" value="InterPro"/>
</dbReference>
<dbReference type="GO" id="GO:0006412">
    <property type="term" value="P:translation"/>
    <property type="evidence" value="ECO:0007669"/>
    <property type="project" value="UniProtKB-UniRule"/>
</dbReference>
<dbReference type="FunFam" id="2.40.30.10:FF:000004">
    <property type="entry name" value="50S ribosomal protein L3"/>
    <property type="match status" value="1"/>
</dbReference>
<dbReference type="FunFam" id="3.30.160.810:FF:000001">
    <property type="entry name" value="50S ribosomal protein L3"/>
    <property type="match status" value="1"/>
</dbReference>
<dbReference type="Gene3D" id="3.30.160.810">
    <property type="match status" value="1"/>
</dbReference>
<dbReference type="Gene3D" id="2.40.30.10">
    <property type="entry name" value="Translation factors"/>
    <property type="match status" value="1"/>
</dbReference>
<dbReference type="HAMAP" id="MF_01325_B">
    <property type="entry name" value="Ribosomal_uL3_B"/>
    <property type="match status" value="1"/>
</dbReference>
<dbReference type="InterPro" id="IPR000597">
    <property type="entry name" value="Ribosomal_uL3"/>
</dbReference>
<dbReference type="InterPro" id="IPR019927">
    <property type="entry name" value="Ribosomal_uL3_bac/org-type"/>
</dbReference>
<dbReference type="InterPro" id="IPR019926">
    <property type="entry name" value="Ribosomal_uL3_CS"/>
</dbReference>
<dbReference type="InterPro" id="IPR009000">
    <property type="entry name" value="Transl_B-barrel_sf"/>
</dbReference>
<dbReference type="NCBIfam" id="TIGR03625">
    <property type="entry name" value="L3_bact"/>
    <property type="match status" value="1"/>
</dbReference>
<dbReference type="PANTHER" id="PTHR11229">
    <property type="entry name" value="50S RIBOSOMAL PROTEIN L3"/>
    <property type="match status" value="1"/>
</dbReference>
<dbReference type="PANTHER" id="PTHR11229:SF16">
    <property type="entry name" value="LARGE RIBOSOMAL SUBUNIT PROTEIN UL3C"/>
    <property type="match status" value="1"/>
</dbReference>
<dbReference type="Pfam" id="PF00297">
    <property type="entry name" value="Ribosomal_L3"/>
    <property type="match status" value="1"/>
</dbReference>
<dbReference type="SUPFAM" id="SSF50447">
    <property type="entry name" value="Translation proteins"/>
    <property type="match status" value="1"/>
</dbReference>
<dbReference type="PROSITE" id="PS00474">
    <property type="entry name" value="RIBOSOMAL_L3"/>
    <property type="match status" value="1"/>
</dbReference>
<evidence type="ECO:0000255" key="1">
    <source>
        <dbReference type="HAMAP-Rule" id="MF_01325"/>
    </source>
</evidence>
<evidence type="ECO:0000256" key="2">
    <source>
        <dbReference type="SAM" id="MobiDB-lite"/>
    </source>
</evidence>
<evidence type="ECO:0000305" key="3"/>
<protein>
    <recommendedName>
        <fullName evidence="1">Large ribosomal subunit protein uL3</fullName>
    </recommendedName>
    <alternativeName>
        <fullName evidence="3">50S ribosomal protein L3</fullName>
    </alternativeName>
</protein>